<name>PURA_METTP</name>
<sequence>MFTIITGAQFGDEGKGKIVDLLAEKYDIIARFQGGDNAGHTVKVGDKTYKLHLVPSGVLFDKRLLIGPGVVLNPKVLWEELQTLWGMGMKVDLGIDPKTSIIMPYHIEMDALREKARTAKIGTTRRGIGYAYIDKIAREEVQMADITDPEMLKRKLEEIAPAKESAIKEMGGDPSVVRDEAQLRAYLEIGRALKNNLTDVSLEINRALDEDKMVLAEGAQGAFLDVIHGTQKFVTSSFTTAGSACANLGVGPVRVDNVVGVVKAYITRVGEGPMPTELKDEIGDRLREAGGEYGTTTGRPRRCGWFDAVLGRKAVYLNGYTELALTKLDVLTGLRRIKICVAYELDGEILEYPPESTYELARCVPVYEEMEGWSESISEALDYSDLPQNARAYVERIQELMDVDIAAISVGPAREQTIYME</sequence>
<accession>A0B8Q8</accession>
<protein>
    <recommendedName>
        <fullName evidence="1">Adenylosuccinate synthetase</fullName>
        <shortName evidence="1">AMPSase</shortName>
        <shortName evidence="1">AdSS</shortName>
        <ecNumber evidence="1">6.3.4.4</ecNumber>
    </recommendedName>
    <alternativeName>
        <fullName evidence="1">IMP--aspartate ligase</fullName>
    </alternativeName>
</protein>
<feature type="chain" id="PRO_1000000862" description="Adenylosuccinate synthetase">
    <location>
        <begin position="1"/>
        <end position="421"/>
    </location>
</feature>
<feature type="active site" description="Proton acceptor" evidence="1">
    <location>
        <position position="12"/>
    </location>
</feature>
<feature type="active site" description="Proton donor" evidence="1">
    <location>
        <position position="40"/>
    </location>
</feature>
<feature type="binding site" evidence="1">
    <location>
        <begin position="11"/>
        <end position="17"/>
    </location>
    <ligand>
        <name>GTP</name>
        <dbReference type="ChEBI" id="CHEBI:37565"/>
    </ligand>
</feature>
<feature type="binding site" description="in other chain" evidence="1">
    <location>
        <begin position="12"/>
        <end position="15"/>
    </location>
    <ligand>
        <name>IMP</name>
        <dbReference type="ChEBI" id="CHEBI:58053"/>
        <note>ligand shared between dimeric partners</note>
    </ligand>
</feature>
<feature type="binding site" evidence="1">
    <location>
        <position position="12"/>
    </location>
    <ligand>
        <name>Mg(2+)</name>
        <dbReference type="ChEBI" id="CHEBI:18420"/>
    </ligand>
</feature>
<feature type="binding site" description="in other chain" evidence="1">
    <location>
        <begin position="37"/>
        <end position="40"/>
    </location>
    <ligand>
        <name>IMP</name>
        <dbReference type="ChEBI" id="CHEBI:58053"/>
        <note>ligand shared between dimeric partners</note>
    </ligand>
</feature>
<feature type="binding site" evidence="1">
    <location>
        <begin position="39"/>
        <end position="41"/>
    </location>
    <ligand>
        <name>GTP</name>
        <dbReference type="ChEBI" id="CHEBI:37565"/>
    </ligand>
</feature>
<feature type="binding site" evidence="1">
    <location>
        <position position="39"/>
    </location>
    <ligand>
        <name>Mg(2+)</name>
        <dbReference type="ChEBI" id="CHEBI:18420"/>
    </ligand>
</feature>
<feature type="binding site" description="in other chain" evidence="1">
    <location>
        <position position="124"/>
    </location>
    <ligand>
        <name>IMP</name>
        <dbReference type="ChEBI" id="CHEBI:58053"/>
        <note>ligand shared between dimeric partners</note>
    </ligand>
</feature>
<feature type="binding site" evidence="1">
    <location>
        <position position="138"/>
    </location>
    <ligand>
        <name>IMP</name>
        <dbReference type="ChEBI" id="CHEBI:58053"/>
        <note>ligand shared between dimeric partners</note>
    </ligand>
</feature>
<feature type="binding site" description="in other chain" evidence="1">
    <location>
        <position position="220"/>
    </location>
    <ligand>
        <name>IMP</name>
        <dbReference type="ChEBI" id="CHEBI:58053"/>
        <note>ligand shared between dimeric partners</note>
    </ligand>
</feature>
<feature type="binding site" description="in other chain" evidence="1">
    <location>
        <position position="235"/>
    </location>
    <ligand>
        <name>IMP</name>
        <dbReference type="ChEBI" id="CHEBI:58053"/>
        <note>ligand shared between dimeric partners</note>
    </ligand>
</feature>
<feature type="binding site" evidence="1">
    <location>
        <begin position="295"/>
        <end position="301"/>
    </location>
    <ligand>
        <name>substrate</name>
    </ligand>
</feature>
<feature type="binding site" description="in other chain" evidence="1">
    <location>
        <position position="299"/>
    </location>
    <ligand>
        <name>IMP</name>
        <dbReference type="ChEBI" id="CHEBI:58053"/>
        <note>ligand shared between dimeric partners</note>
    </ligand>
</feature>
<feature type="binding site" evidence="1">
    <location>
        <position position="301"/>
    </location>
    <ligand>
        <name>GTP</name>
        <dbReference type="ChEBI" id="CHEBI:37565"/>
    </ligand>
</feature>
<feature type="binding site" evidence="1">
    <location>
        <begin position="327"/>
        <end position="329"/>
    </location>
    <ligand>
        <name>GTP</name>
        <dbReference type="ChEBI" id="CHEBI:37565"/>
    </ligand>
</feature>
<feature type="binding site" evidence="1">
    <location>
        <begin position="409"/>
        <end position="411"/>
    </location>
    <ligand>
        <name>GTP</name>
        <dbReference type="ChEBI" id="CHEBI:37565"/>
    </ligand>
</feature>
<organism>
    <name type="scientific">Methanothrix thermoacetophila (strain DSM 6194 / JCM 14653 / NBRC 101360 / PT)</name>
    <name type="common">Methanosaeta thermophila</name>
    <dbReference type="NCBI Taxonomy" id="349307"/>
    <lineage>
        <taxon>Archaea</taxon>
        <taxon>Methanobacteriati</taxon>
        <taxon>Methanobacteriota</taxon>
        <taxon>Stenosarchaea group</taxon>
        <taxon>Methanomicrobia</taxon>
        <taxon>Methanotrichales</taxon>
        <taxon>Methanotrichaceae</taxon>
        <taxon>Methanothrix</taxon>
    </lineage>
</organism>
<keyword id="KW-0963">Cytoplasm</keyword>
<keyword id="KW-0342">GTP-binding</keyword>
<keyword id="KW-0436">Ligase</keyword>
<keyword id="KW-0460">Magnesium</keyword>
<keyword id="KW-0479">Metal-binding</keyword>
<keyword id="KW-0547">Nucleotide-binding</keyword>
<keyword id="KW-0658">Purine biosynthesis</keyword>
<keyword id="KW-1185">Reference proteome</keyword>
<gene>
    <name evidence="1" type="primary">purA</name>
    <name type="ordered locus">Mthe_1304</name>
</gene>
<reference key="1">
    <citation type="submission" date="2006-10" db="EMBL/GenBank/DDBJ databases">
        <title>Complete sequence of Methanosaeta thermophila PT.</title>
        <authorList>
            <consortium name="US DOE Joint Genome Institute"/>
            <person name="Copeland A."/>
            <person name="Lucas S."/>
            <person name="Lapidus A."/>
            <person name="Barry K."/>
            <person name="Detter J.C."/>
            <person name="Glavina del Rio T."/>
            <person name="Hammon N."/>
            <person name="Israni S."/>
            <person name="Pitluck S."/>
            <person name="Chain P."/>
            <person name="Malfatti S."/>
            <person name="Shin M."/>
            <person name="Vergez L."/>
            <person name="Schmutz J."/>
            <person name="Larimer F."/>
            <person name="Land M."/>
            <person name="Hauser L."/>
            <person name="Kyrpides N."/>
            <person name="Kim E."/>
            <person name="Smith K.S."/>
            <person name="Ingram-Smith C."/>
            <person name="Richardson P."/>
        </authorList>
    </citation>
    <scope>NUCLEOTIDE SEQUENCE [LARGE SCALE GENOMIC DNA]</scope>
    <source>
        <strain>DSM 6194 / JCM 14653 / NBRC 101360 / PT</strain>
    </source>
</reference>
<comment type="function">
    <text evidence="1">Plays an important role in the de novo pathway of purine nucleotide biosynthesis. Catalyzes the first committed step in the biosynthesis of AMP from IMP.</text>
</comment>
<comment type="catalytic activity">
    <reaction evidence="1">
        <text>IMP + L-aspartate + GTP = N(6)-(1,2-dicarboxyethyl)-AMP + GDP + phosphate + 2 H(+)</text>
        <dbReference type="Rhea" id="RHEA:15753"/>
        <dbReference type="ChEBI" id="CHEBI:15378"/>
        <dbReference type="ChEBI" id="CHEBI:29991"/>
        <dbReference type="ChEBI" id="CHEBI:37565"/>
        <dbReference type="ChEBI" id="CHEBI:43474"/>
        <dbReference type="ChEBI" id="CHEBI:57567"/>
        <dbReference type="ChEBI" id="CHEBI:58053"/>
        <dbReference type="ChEBI" id="CHEBI:58189"/>
        <dbReference type="EC" id="6.3.4.4"/>
    </reaction>
</comment>
<comment type="cofactor">
    <cofactor evidence="1">
        <name>Mg(2+)</name>
        <dbReference type="ChEBI" id="CHEBI:18420"/>
    </cofactor>
    <text evidence="1">Binds 1 Mg(2+) ion per subunit.</text>
</comment>
<comment type="pathway">
    <text evidence="1">Purine metabolism; AMP biosynthesis via de novo pathway; AMP from IMP: step 1/2.</text>
</comment>
<comment type="subunit">
    <text evidence="1">Homodimer.</text>
</comment>
<comment type="subcellular location">
    <subcellularLocation>
        <location evidence="1">Cytoplasm</location>
    </subcellularLocation>
</comment>
<comment type="similarity">
    <text evidence="1">Belongs to the adenylosuccinate synthetase family.</text>
</comment>
<proteinExistence type="inferred from homology"/>
<evidence type="ECO:0000255" key="1">
    <source>
        <dbReference type="HAMAP-Rule" id="MF_00011"/>
    </source>
</evidence>
<dbReference type="EC" id="6.3.4.4" evidence="1"/>
<dbReference type="EMBL" id="CP000477">
    <property type="protein sequence ID" value="ABK15082.1"/>
    <property type="molecule type" value="Genomic_DNA"/>
</dbReference>
<dbReference type="RefSeq" id="WP_011696474.1">
    <property type="nucleotide sequence ID" value="NC_008553.1"/>
</dbReference>
<dbReference type="SMR" id="A0B8Q8"/>
<dbReference type="STRING" id="349307.Mthe_1304"/>
<dbReference type="GeneID" id="4462945"/>
<dbReference type="KEGG" id="mtp:Mthe_1304"/>
<dbReference type="HOGENOM" id="CLU_029848_0_0_2"/>
<dbReference type="OrthoDB" id="372247at2157"/>
<dbReference type="UniPathway" id="UPA00075">
    <property type="reaction ID" value="UER00335"/>
</dbReference>
<dbReference type="Proteomes" id="UP000000674">
    <property type="component" value="Chromosome"/>
</dbReference>
<dbReference type="GO" id="GO:0005737">
    <property type="term" value="C:cytoplasm"/>
    <property type="evidence" value="ECO:0007669"/>
    <property type="project" value="UniProtKB-SubCell"/>
</dbReference>
<dbReference type="GO" id="GO:0004019">
    <property type="term" value="F:adenylosuccinate synthase activity"/>
    <property type="evidence" value="ECO:0007669"/>
    <property type="project" value="UniProtKB-UniRule"/>
</dbReference>
<dbReference type="GO" id="GO:0005525">
    <property type="term" value="F:GTP binding"/>
    <property type="evidence" value="ECO:0007669"/>
    <property type="project" value="UniProtKB-UniRule"/>
</dbReference>
<dbReference type="GO" id="GO:0000287">
    <property type="term" value="F:magnesium ion binding"/>
    <property type="evidence" value="ECO:0007669"/>
    <property type="project" value="UniProtKB-UniRule"/>
</dbReference>
<dbReference type="GO" id="GO:0044208">
    <property type="term" value="P:'de novo' AMP biosynthetic process"/>
    <property type="evidence" value="ECO:0007669"/>
    <property type="project" value="UniProtKB-UniRule"/>
</dbReference>
<dbReference type="GO" id="GO:0046040">
    <property type="term" value="P:IMP metabolic process"/>
    <property type="evidence" value="ECO:0007669"/>
    <property type="project" value="TreeGrafter"/>
</dbReference>
<dbReference type="CDD" id="cd03108">
    <property type="entry name" value="AdSS"/>
    <property type="match status" value="1"/>
</dbReference>
<dbReference type="FunFam" id="1.10.300.10:FF:000001">
    <property type="entry name" value="Adenylosuccinate synthetase"/>
    <property type="match status" value="1"/>
</dbReference>
<dbReference type="FunFam" id="3.90.170.10:FF:000001">
    <property type="entry name" value="Adenylosuccinate synthetase"/>
    <property type="match status" value="1"/>
</dbReference>
<dbReference type="Gene3D" id="3.40.440.10">
    <property type="entry name" value="Adenylosuccinate Synthetase, subunit A, domain 1"/>
    <property type="match status" value="1"/>
</dbReference>
<dbReference type="Gene3D" id="1.10.300.10">
    <property type="entry name" value="Adenylosuccinate Synthetase, subunit A, domain 2"/>
    <property type="match status" value="1"/>
</dbReference>
<dbReference type="Gene3D" id="3.90.170.10">
    <property type="entry name" value="Adenylosuccinate Synthetase, subunit A, domain 3"/>
    <property type="match status" value="1"/>
</dbReference>
<dbReference type="HAMAP" id="MF_00011">
    <property type="entry name" value="Adenylosucc_synth"/>
    <property type="match status" value="1"/>
</dbReference>
<dbReference type="InterPro" id="IPR018220">
    <property type="entry name" value="Adenylosuccin_syn_GTP-bd"/>
</dbReference>
<dbReference type="InterPro" id="IPR042109">
    <property type="entry name" value="Adenylosuccinate_synth_dom1"/>
</dbReference>
<dbReference type="InterPro" id="IPR042110">
    <property type="entry name" value="Adenylosuccinate_synth_dom2"/>
</dbReference>
<dbReference type="InterPro" id="IPR042111">
    <property type="entry name" value="Adenylosuccinate_synth_dom3"/>
</dbReference>
<dbReference type="InterPro" id="IPR001114">
    <property type="entry name" value="Adenylosuccinate_synthetase"/>
</dbReference>
<dbReference type="InterPro" id="IPR027417">
    <property type="entry name" value="P-loop_NTPase"/>
</dbReference>
<dbReference type="NCBIfam" id="NF002223">
    <property type="entry name" value="PRK01117.1"/>
    <property type="match status" value="1"/>
</dbReference>
<dbReference type="NCBIfam" id="TIGR00184">
    <property type="entry name" value="purA"/>
    <property type="match status" value="1"/>
</dbReference>
<dbReference type="PANTHER" id="PTHR11846">
    <property type="entry name" value="ADENYLOSUCCINATE SYNTHETASE"/>
    <property type="match status" value="1"/>
</dbReference>
<dbReference type="PANTHER" id="PTHR11846:SF0">
    <property type="entry name" value="ADENYLOSUCCINATE SYNTHETASE"/>
    <property type="match status" value="1"/>
</dbReference>
<dbReference type="Pfam" id="PF00709">
    <property type="entry name" value="Adenylsucc_synt"/>
    <property type="match status" value="1"/>
</dbReference>
<dbReference type="SMART" id="SM00788">
    <property type="entry name" value="Adenylsucc_synt"/>
    <property type="match status" value="1"/>
</dbReference>
<dbReference type="SUPFAM" id="SSF52540">
    <property type="entry name" value="P-loop containing nucleoside triphosphate hydrolases"/>
    <property type="match status" value="1"/>
</dbReference>
<dbReference type="PROSITE" id="PS01266">
    <property type="entry name" value="ADENYLOSUCCIN_SYN_1"/>
    <property type="match status" value="1"/>
</dbReference>